<sequence length="307" mass="33275">MAGLFSSAVAPTERRKALRAALAAPEIARMPGAFSPLAARAIQEAGFEGVYVSGAVVAADLALPDIGLTTLTEVAHRSRQIARVTDLPVLVDADTGFGEPMSAARTVSELEDAGVAGCHLEDQVNPKRCGHLDGKEVVGTDIMVRRIAAAVNERRDEQFVICARTDAAGVEGIDSAIERAKAYADAGADMIFTEALYSPADFEKFRAAVDIPLLANMTEFGKTELLPAQLLEDIGYNAVIYPVTLLRIAMGQVEQALGDIANTGIQTDWVDRMQHRSRLYELLRYNEYNAFDQQVFTYSADSYKPIF</sequence>
<reference key="1">
    <citation type="journal article" date="2002" name="J. Bacteriol.">
        <title>Identification of two prpDBC gene clusters in Corynebacterium glutamicum and their involvement in propionate degradation via the 2-methylcitrate cycle.</title>
        <authorList>
            <person name="Claes W.A."/>
            <person name="Puehler A."/>
            <person name="Kalinowski J."/>
        </authorList>
    </citation>
    <scope>NUCLEOTIDE SEQUENCE [GENOMIC DNA]</scope>
    <scope>FUNCTION</scope>
    <source>
        <strain>ATCC 13032 / DSM 20300 / JCM 1318 / BCRC 11384 / CCUG 27702 / LMG 3730 / NBRC 12168 / NCIMB 10025 / NRRL B-2784 / 534</strain>
    </source>
</reference>
<reference key="2">
    <citation type="journal article" date="2003" name="Appl. Microbiol. Biotechnol.">
        <title>The Corynebacterium glutamicum genome: features and impacts on biotechnological processes.</title>
        <authorList>
            <person name="Ikeda M."/>
            <person name="Nakagawa S."/>
        </authorList>
    </citation>
    <scope>NUCLEOTIDE SEQUENCE [LARGE SCALE GENOMIC DNA]</scope>
    <source>
        <strain>ATCC 13032 / DSM 20300 / JCM 1318 / BCRC 11384 / CCUG 27702 / LMG 3730 / NBRC 12168 / NCIMB 10025 / NRRL B-2784 / 534</strain>
    </source>
</reference>
<reference key="3">
    <citation type="journal article" date="2003" name="J. Biotechnol.">
        <title>The complete Corynebacterium glutamicum ATCC 13032 genome sequence and its impact on the production of L-aspartate-derived amino acids and vitamins.</title>
        <authorList>
            <person name="Kalinowski J."/>
            <person name="Bathe B."/>
            <person name="Bartels D."/>
            <person name="Bischoff N."/>
            <person name="Bott M."/>
            <person name="Burkovski A."/>
            <person name="Dusch N."/>
            <person name="Eggeling L."/>
            <person name="Eikmanns B.J."/>
            <person name="Gaigalat L."/>
            <person name="Goesmann A."/>
            <person name="Hartmann M."/>
            <person name="Huthmacher K."/>
            <person name="Kraemer R."/>
            <person name="Linke B."/>
            <person name="McHardy A.C."/>
            <person name="Meyer F."/>
            <person name="Moeckel B."/>
            <person name="Pfefferle W."/>
            <person name="Puehler A."/>
            <person name="Rey D.A."/>
            <person name="Rueckert C."/>
            <person name="Rupp O."/>
            <person name="Sahm H."/>
            <person name="Wendisch V.F."/>
            <person name="Wiegraebe I."/>
            <person name="Tauch A."/>
        </authorList>
    </citation>
    <scope>NUCLEOTIDE SEQUENCE [LARGE SCALE GENOMIC DNA]</scope>
    <source>
        <strain>ATCC 13032 / DSM 20300 / JCM 1318 / BCRC 11384 / CCUG 27702 / LMG 3730 / NBRC 12168 / NCIMB 10025 / NRRL B-2784 / 534</strain>
    </source>
</reference>
<name>PRPB2_CORGL</name>
<organism>
    <name type="scientific">Corynebacterium glutamicum (strain ATCC 13032 / DSM 20300 / JCM 1318 / BCRC 11384 / CCUG 27702 / LMG 3730 / NBRC 12168 / NCIMB 10025 / NRRL B-2784 / 534)</name>
    <dbReference type="NCBI Taxonomy" id="196627"/>
    <lineage>
        <taxon>Bacteria</taxon>
        <taxon>Bacillati</taxon>
        <taxon>Actinomycetota</taxon>
        <taxon>Actinomycetes</taxon>
        <taxon>Mycobacteriales</taxon>
        <taxon>Corynebacteriaceae</taxon>
        <taxon>Corynebacterium</taxon>
    </lineage>
</organism>
<gene>
    <name evidence="3" type="primary">prpB2</name>
    <name type="ordered locus">Cgl0658</name>
    <name type="ordered locus">cg0760</name>
</gene>
<accession>Q8NSL2</accession>
<evidence type="ECO:0000250" key="1">
    <source>
        <dbReference type="UniProtKB" id="P77541"/>
    </source>
</evidence>
<evidence type="ECO:0000269" key="2">
    <source>
    </source>
</evidence>
<evidence type="ECO:0000305" key="3"/>
<keyword id="KW-0456">Lyase</keyword>
<keyword id="KW-0460">Magnesium</keyword>
<keyword id="KW-0479">Metal-binding</keyword>
<keyword id="KW-1185">Reference proteome</keyword>
<comment type="function">
    <text evidence="2">Involved in the catabolism of short chain fatty acids (SCFA) via the 2-methylcitrate cycle I (propionate degradation route). Catalyzes the thermodynamically favored C-C bond cleavage of (2R,3S)-2-methylisocitrate to yield pyruvate and succinate via an alpha-carboxy-carbanion intermediate.</text>
</comment>
<comment type="catalytic activity">
    <reaction evidence="1">
        <text>(2S,3R)-3-hydroxybutane-1,2,3-tricarboxylate = pyruvate + succinate</text>
        <dbReference type="Rhea" id="RHEA:16809"/>
        <dbReference type="ChEBI" id="CHEBI:15361"/>
        <dbReference type="ChEBI" id="CHEBI:30031"/>
        <dbReference type="ChEBI" id="CHEBI:57429"/>
        <dbReference type="EC" id="4.1.3.30"/>
    </reaction>
</comment>
<comment type="cofactor">
    <cofactor evidence="1">
        <name>Mg(2+)</name>
        <dbReference type="ChEBI" id="CHEBI:18420"/>
    </cofactor>
</comment>
<comment type="pathway">
    <text evidence="1">Organic acid metabolism; propanoate degradation.</text>
</comment>
<comment type="subunit">
    <text evidence="1">Homotetramer; dimer of dimers.</text>
</comment>
<comment type="miscellaneous">
    <text evidence="2">The prpD2B2C2 operon is essential for growth on propionate as sole carbon source.</text>
</comment>
<comment type="similarity">
    <text evidence="3">Belongs to the isocitrate lyase/PEP mutase superfamily. Methylisocitrate lyase family.</text>
</comment>
<comment type="sequence caution" evidence="3">
    <conflict type="erroneous initiation">
        <sequence resource="EMBL-CDS" id="BAB98051"/>
    </conflict>
    <text>Truncated N-terminus.</text>
</comment>
<protein>
    <recommendedName>
        <fullName evidence="3">Probable 2-methylisocitrate lyase 2</fullName>
        <shortName evidence="3">2-MIC</shortName>
        <shortName evidence="3">MICL</shortName>
        <ecNumber evidence="1">4.1.3.30</ecNumber>
    </recommendedName>
    <alternativeName>
        <fullName evidence="1">(2R,3S)-2-methylisocitrate lyase</fullName>
    </alternativeName>
</protein>
<proteinExistence type="inferred from homology"/>
<dbReference type="EC" id="4.1.3.30" evidence="1"/>
<dbReference type="EMBL" id="AF434799">
    <property type="protein sequence ID" value="AAM21505.1"/>
    <property type="molecule type" value="Genomic_DNA"/>
</dbReference>
<dbReference type="EMBL" id="BA000036">
    <property type="protein sequence ID" value="BAB98051.1"/>
    <property type="status" value="ALT_INIT"/>
    <property type="molecule type" value="Genomic_DNA"/>
</dbReference>
<dbReference type="EMBL" id="BX927149">
    <property type="protein sequence ID" value="CAF19364.1"/>
    <property type="molecule type" value="Genomic_DNA"/>
</dbReference>
<dbReference type="RefSeq" id="NP_599890.2">
    <property type="nucleotide sequence ID" value="NC_003450.3"/>
</dbReference>
<dbReference type="SMR" id="Q8NSL2"/>
<dbReference type="STRING" id="196627.cg0760"/>
<dbReference type="KEGG" id="cgb:cg0760"/>
<dbReference type="KEGG" id="cgl:Cgl0658"/>
<dbReference type="PATRIC" id="fig|196627.13.peg.644"/>
<dbReference type="eggNOG" id="COG2513">
    <property type="taxonomic scope" value="Bacteria"/>
</dbReference>
<dbReference type="HOGENOM" id="CLU_027389_3_2_11"/>
<dbReference type="OrthoDB" id="9771433at2"/>
<dbReference type="BioCyc" id="CORYNE:G18NG-10220-MONOMER"/>
<dbReference type="UniPathway" id="UPA00946"/>
<dbReference type="Proteomes" id="UP000000582">
    <property type="component" value="Chromosome"/>
</dbReference>
<dbReference type="Proteomes" id="UP000001009">
    <property type="component" value="Chromosome"/>
</dbReference>
<dbReference type="GO" id="GO:0046872">
    <property type="term" value="F:metal ion binding"/>
    <property type="evidence" value="ECO:0007669"/>
    <property type="project" value="UniProtKB-KW"/>
</dbReference>
<dbReference type="GO" id="GO:0046421">
    <property type="term" value="F:methylisocitrate lyase activity"/>
    <property type="evidence" value="ECO:0007669"/>
    <property type="project" value="UniProtKB-EC"/>
</dbReference>
<dbReference type="GO" id="GO:0019629">
    <property type="term" value="P:propionate catabolic process, 2-methylcitrate cycle"/>
    <property type="evidence" value="ECO:0007669"/>
    <property type="project" value="InterPro"/>
</dbReference>
<dbReference type="CDD" id="cd00377">
    <property type="entry name" value="ICL_PEPM"/>
    <property type="match status" value="1"/>
</dbReference>
<dbReference type="Gene3D" id="3.20.20.60">
    <property type="entry name" value="Phosphoenolpyruvate-binding domains"/>
    <property type="match status" value="1"/>
</dbReference>
<dbReference type="InterPro" id="IPR039556">
    <property type="entry name" value="ICL/PEPM"/>
</dbReference>
<dbReference type="InterPro" id="IPR018523">
    <property type="entry name" value="Isocitrate_lyase_ph_CS"/>
</dbReference>
<dbReference type="InterPro" id="IPR012695">
    <property type="entry name" value="PrpB"/>
</dbReference>
<dbReference type="InterPro" id="IPR015813">
    <property type="entry name" value="Pyrv/PenolPyrv_kinase-like_dom"/>
</dbReference>
<dbReference type="InterPro" id="IPR040442">
    <property type="entry name" value="Pyrv_kinase-like_dom_sf"/>
</dbReference>
<dbReference type="NCBIfam" id="TIGR02317">
    <property type="entry name" value="prpB"/>
    <property type="match status" value="1"/>
</dbReference>
<dbReference type="PANTHER" id="PTHR42905:SF5">
    <property type="entry name" value="CARBOXYVINYL-CARBOXYPHOSPHONATE PHOSPHORYLMUTASE, CHLOROPLASTIC"/>
    <property type="match status" value="1"/>
</dbReference>
<dbReference type="PANTHER" id="PTHR42905">
    <property type="entry name" value="PHOSPHOENOLPYRUVATE CARBOXYLASE"/>
    <property type="match status" value="1"/>
</dbReference>
<dbReference type="Pfam" id="PF13714">
    <property type="entry name" value="PEP_mutase"/>
    <property type="match status" value="1"/>
</dbReference>
<dbReference type="SUPFAM" id="SSF51621">
    <property type="entry name" value="Phosphoenolpyruvate/pyruvate domain"/>
    <property type="match status" value="1"/>
</dbReference>
<dbReference type="PROSITE" id="PS00161">
    <property type="entry name" value="ISOCITRATE_LYASE"/>
    <property type="match status" value="1"/>
</dbReference>
<feature type="chain" id="PRO_0000068814" description="Probable 2-methylisocitrate lyase 2">
    <location>
        <begin position="1"/>
        <end position="307"/>
    </location>
</feature>
<feature type="binding site" evidence="1">
    <location>
        <begin position="53"/>
        <end position="55"/>
    </location>
    <ligand>
        <name>substrate</name>
    </ligand>
</feature>
<feature type="binding site" evidence="1">
    <location>
        <position position="92"/>
    </location>
    <ligand>
        <name>Mg(2+)</name>
        <dbReference type="ChEBI" id="CHEBI:18420"/>
    </ligand>
</feature>
<feature type="binding site" evidence="1">
    <location>
        <position position="94"/>
    </location>
    <ligand>
        <name>Mg(2+)</name>
        <dbReference type="ChEBI" id="CHEBI:18420"/>
    </ligand>
</feature>
<feature type="binding site" evidence="1">
    <location>
        <begin position="129"/>
        <end position="130"/>
    </location>
    <ligand>
        <name>substrate</name>
    </ligand>
</feature>
<feature type="binding site" evidence="1">
    <location>
        <position position="164"/>
    </location>
    <ligand>
        <name>substrate</name>
    </ligand>
</feature>
<feature type="binding site" evidence="1">
    <location>
        <position position="194"/>
    </location>
    <ligand>
        <name>substrate</name>
    </ligand>
</feature>
<feature type="binding site" evidence="1">
    <location>
        <begin position="216"/>
        <end position="218"/>
    </location>
    <ligand>
        <name>substrate</name>
    </ligand>
</feature>
<feature type="binding site" evidence="1">
    <location>
        <position position="247"/>
    </location>
    <ligand>
        <name>substrate</name>
    </ligand>
</feature>
<feature type="binding site" evidence="1">
    <location>
        <position position="276"/>
    </location>
    <ligand>
        <name>substrate</name>
    </ligand>
</feature>